<evidence type="ECO:0000255" key="1">
    <source>
        <dbReference type="HAMAP-Rule" id="MF_01243"/>
    </source>
</evidence>
<evidence type="ECO:0000255" key="2">
    <source>
        <dbReference type="PROSITE-ProRule" id="PRU00054"/>
    </source>
</evidence>
<accession>B7IVH6</accession>
<comment type="function">
    <text evidence="1">Is an aliphatic amidase with a restricted substrate specificity, as it only hydrolyzes formamide.</text>
</comment>
<comment type="catalytic activity">
    <reaction evidence="1">
        <text>formamide + H2O = formate + NH4(+)</text>
        <dbReference type="Rhea" id="RHEA:21948"/>
        <dbReference type="ChEBI" id="CHEBI:15377"/>
        <dbReference type="ChEBI" id="CHEBI:15740"/>
        <dbReference type="ChEBI" id="CHEBI:16397"/>
        <dbReference type="ChEBI" id="CHEBI:28938"/>
        <dbReference type="EC" id="3.5.1.49"/>
    </reaction>
</comment>
<comment type="similarity">
    <text evidence="1">Belongs to the carbon-nitrogen hydrolase superfamily. Aliphatic amidase family.</text>
</comment>
<dbReference type="EC" id="3.5.1.49" evidence="1"/>
<dbReference type="EMBL" id="CP001186">
    <property type="protein sequence ID" value="ACK93411.1"/>
    <property type="molecule type" value="Genomic_DNA"/>
</dbReference>
<dbReference type="RefSeq" id="WP_000535809.1">
    <property type="nucleotide sequence ID" value="NC_011772.1"/>
</dbReference>
<dbReference type="SMR" id="B7IVH6"/>
<dbReference type="KEGG" id="bcg:BCG9842_B1198"/>
<dbReference type="HOGENOM" id="CLU_071797_0_0_9"/>
<dbReference type="Proteomes" id="UP000006744">
    <property type="component" value="Chromosome"/>
</dbReference>
<dbReference type="GO" id="GO:0004328">
    <property type="term" value="F:formamidase activity"/>
    <property type="evidence" value="ECO:0007669"/>
    <property type="project" value="UniProtKB-UniRule"/>
</dbReference>
<dbReference type="GO" id="GO:0050126">
    <property type="term" value="F:N-carbamoylputrescine amidase activity"/>
    <property type="evidence" value="ECO:0007669"/>
    <property type="project" value="TreeGrafter"/>
</dbReference>
<dbReference type="GO" id="GO:0033388">
    <property type="term" value="P:putrescine biosynthetic process from arginine"/>
    <property type="evidence" value="ECO:0007669"/>
    <property type="project" value="TreeGrafter"/>
</dbReference>
<dbReference type="CDD" id="cd07565">
    <property type="entry name" value="aliphatic_amidase"/>
    <property type="match status" value="1"/>
</dbReference>
<dbReference type="Gene3D" id="3.60.110.10">
    <property type="entry name" value="Carbon-nitrogen hydrolase"/>
    <property type="match status" value="1"/>
</dbReference>
<dbReference type="HAMAP" id="MF_01243">
    <property type="entry name" value="Formamidase"/>
    <property type="match status" value="1"/>
</dbReference>
<dbReference type="InterPro" id="IPR050345">
    <property type="entry name" value="Aliph_Amidase/BUP"/>
</dbReference>
<dbReference type="InterPro" id="IPR003010">
    <property type="entry name" value="C-N_Hydrolase"/>
</dbReference>
<dbReference type="InterPro" id="IPR036526">
    <property type="entry name" value="C-N_Hydrolase_sf"/>
</dbReference>
<dbReference type="InterPro" id="IPR022843">
    <property type="entry name" value="Formamidase"/>
</dbReference>
<dbReference type="NCBIfam" id="NF009803">
    <property type="entry name" value="PRK13287.1"/>
    <property type="match status" value="1"/>
</dbReference>
<dbReference type="PANTHER" id="PTHR43674:SF15">
    <property type="entry name" value="FORMAMIDASE"/>
    <property type="match status" value="1"/>
</dbReference>
<dbReference type="PANTHER" id="PTHR43674">
    <property type="entry name" value="NITRILASE C965.09-RELATED"/>
    <property type="match status" value="1"/>
</dbReference>
<dbReference type="Pfam" id="PF00795">
    <property type="entry name" value="CN_hydrolase"/>
    <property type="match status" value="1"/>
</dbReference>
<dbReference type="SUPFAM" id="SSF56317">
    <property type="entry name" value="Carbon-nitrogen hydrolase"/>
    <property type="match status" value="1"/>
</dbReference>
<dbReference type="PROSITE" id="PS50263">
    <property type="entry name" value="CN_HYDROLASE"/>
    <property type="match status" value="1"/>
</dbReference>
<keyword id="KW-0378">Hydrolase</keyword>
<proteinExistence type="inferred from homology"/>
<sequence>MGSSGSMVKPISGFLTALIQYPVPVVESRADIDKQIQQIIKTIHSTKSGYPGLELIVFPEYSTQGLNTKKWTTEEFLCTVPGPETDLFAEACKESKVYGVFSIMEKNPGGGEPYNTAVIIDPQGEMILKYRKLNPWVPVEPWKAGDLGLPVCVGPGGSKLAVCICHDGMFPEVAREAAYKGANVLIRISGYSTQVSEQWMLTNRSNAWQNLMYTLSVNLAGYDGVFYYFGEGQVCNFDGTTLVQGHRNPWEIVTAEVYPELADQARLGWGLENNIYNLGSRGYVATPGGVKENPYTFIKDLAEGKYKVPWEDEIKVKDGSIYGYPVKKTIHS</sequence>
<protein>
    <recommendedName>
        <fullName evidence="1">Formamidase</fullName>
        <ecNumber evidence="1">3.5.1.49</ecNumber>
    </recommendedName>
    <alternativeName>
        <fullName evidence="1">Formamide amidohydrolase</fullName>
    </alternativeName>
</protein>
<gene>
    <name evidence="1" type="primary">amiF</name>
    <name type="ordered locus">BCG9842_B1198</name>
</gene>
<organism>
    <name type="scientific">Bacillus cereus (strain G9842)</name>
    <dbReference type="NCBI Taxonomy" id="405531"/>
    <lineage>
        <taxon>Bacteria</taxon>
        <taxon>Bacillati</taxon>
        <taxon>Bacillota</taxon>
        <taxon>Bacilli</taxon>
        <taxon>Bacillales</taxon>
        <taxon>Bacillaceae</taxon>
        <taxon>Bacillus</taxon>
        <taxon>Bacillus cereus group</taxon>
    </lineage>
</organism>
<name>AMIF_BACC2</name>
<feature type="chain" id="PRO_1000139811" description="Formamidase">
    <location>
        <begin position="1"/>
        <end position="332"/>
    </location>
</feature>
<feature type="domain" description="CN hydrolase" evidence="2">
    <location>
        <begin position="14"/>
        <end position="259"/>
    </location>
</feature>
<feature type="active site" description="Proton acceptor" evidence="1">
    <location>
        <position position="60"/>
    </location>
</feature>
<feature type="active site" description="Proton donor" evidence="1">
    <location>
        <position position="132"/>
    </location>
</feature>
<feature type="active site" description="Nucleophile" evidence="1">
    <location>
        <position position="165"/>
    </location>
</feature>
<reference key="1">
    <citation type="submission" date="2008-10" db="EMBL/GenBank/DDBJ databases">
        <title>Genome sequence of Bacillus cereus G9842.</title>
        <authorList>
            <person name="Dodson R.J."/>
            <person name="Durkin A.S."/>
            <person name="Rosovitz M.J."/>
            <person name="Rasko D.A."/>
            <person name="Hoffmaster A."/>
            <person name="Ravel J."/>
            <person name="Sutton G."/>
        </authorList>
    </citation>
    <scope>NUCLEOTIDE SEQUENCE [LARGE SCALE GENOMIC DNA]</scope>
    <source>
        <strain>G9842</strain>
    </source>
</reference>